<feature type="chain" id="PRO_0000386991" description="Ribosomal RNA small subunit methyltransferase H">
    <location>
        <begin position="1"/>
        <end position="373"/>
    </location>
</feature>
<feature type="region of interest" description="Disordered" evidence="2">
    <location>
        <begin position="343"/>
        <end position="373"/>
    </location>
</feature>
<feature type="compositionally biased region" description="Basic and acidic residues" evidence="2">
    <location>
        <begin position="343"/>
        <end position="355"/>
    </location>
</feature>
<feature type="compositionally biased region" description="Basic and acidic residues" evidence="2">
    <location>
        <begin position="363"/>
        <end position="373"/>
    </location>
</feature>
<feature type="binding site" evidence="1">
    <location>
        <begin position="92"/>
        <end position="94"/>
    </location>
    <ligand>
        <name>S-adenosyl-L-methionine</name>
        <dbReference type="ChEBI" id="CHEBI:59789"/>
    </ligand>
</feature>
<feature type="binding site" evidence="1">
    <location>
        <position position="111"/>
    </location>
    <ligand>
        <name>S-adenosyl-L-methionine</name>
        <dbReference type="ChEBI" id="CHEBI:59789"/>
    </ligand>
</feature>
<feature type="binding site" evidence="1">
    <location>
        <position position="138"/>
    </location>
    <ligand>
        <name>S-adenosyl-L-methionine</name>
        <dbReference type="ChEBI" id="CHEBI:59789"/>
    </ligand>
</feature>
<feature type="binding site" evidence="1">
    <location>
        <position position="159"/>
    </location>
    <ligand>
        <name>S-adenosyl-L-methionine</name>
        <dbReference type="ChEBI" id="CHEBI:59789"/>
    </ligand>
</feature>
<feature type="binding site" evidence="1">
    <location>
        <position position="166"/>
    </location>
    <ligand>
        <name>S-adenosyl-L-methionine</name>
        <dbReference type="ChEBI" id="CHEBI:59789"/>
    </ligand>
</feature>
<evidence type="ECO:0000255" key="1">
    <source>
        <dbReference type="HAMAP-Rule" id="MF_01007"/>
    </source>
</evidence>
<evidence type="ECO:0000256" key="2">
    <source>
        <dbReference type="SAM" id="MobiDB-lite"/>
    </source>
</evidence>
<evidence type="ECO:0000305" key="3"/>
<dbReference type="EC" id="2.1.1.199" evidence="1"/>
<dbReference type="EMBL" id="CP000480">
    <property type="protein sequence ID" value="ABK70680.1"/>
    <property type="status" value="ALT_INIT"/>
    <property type="molecule type" value="Genomic_DNA"/>
</dbReference>
<dbReference type="EMBL" id="CP001663">
    <property type="protein sequence ID" value="AFP40592.1"/>
    <property type="status" value="ALT_INIT"/>
    <property type="molecule type" value="Genomic_DNA"/>
</dbReference>
<dbReference type="RefSeq" id="YP_888512.1">
    <property type="nucleotide sequence ID" value="NC_008596.1"/>
</dbReference>
<dbReference type="SMR" id="A0R024"/>
<dbReference type="STRING" id="246196.MSMEG_4235"/>
<dbReference type="PaxDb" id="246196-MSMEI_4135"/>
<dbReference type="KEGG" id="msg:MSMEI_4135"/>
<dbReference type="KEGG" id="msm:MSMEG_4235"/>
<dbReference type="PATRIC" id="fig|246196.19.peg.4155"/>
<dbReference type="eggNOG" id="COG0275">
    <property type="taxonomic scope" value="Bacteria"/>
</dbReference>
<dbReference type="OrthoDB" id="9806637at2"/>
<dbReference type="Proteomes" id="UP000000757">
    <property type="component" value="Chromosome"/>
</dbReference>
<dbReference type="Proteomes" id="UP000006158">
    <property type="component" value="Chromosome"/>
</dbReference>
<dbReference type="GO" id="GO:0005737">
    <property type="term" value="C:cytoplasm"/>
    <property type="evidence" value="ECO:0007669"/>
    <property type="project" value="UniProtKB-SubCell"/>
</dbReference>
<dbReference type="GO" id="GO:0071424">
    <property type="term" value="F:rRNA (cytosine-N4-)-methyltransferase activity"/>
    <property type="evidence" value="ECO:0007669"/>
    <property type="project" value="UniProtKB-UniRule"/>
</dbReference>
<dbReference type="GO" id="GO:0070475">
    <property type="term" value="P:rRNA base methylation"/>
    <property type="evidence" value="ECO:0007669"/>
    <property type="project" value="UniProtKB-UniRule"/>
</dbReference>
<dbReference type="FunFam" id="1.10.150.170:FF:000001">
    <property type="entry name" value="Ribosomal RNA small subunit methyltransferase H"/>
    <property type="match status" value="1"/>
</dbReference>
<dbReference type="Gene3D" id="1.10.150.170">
    <property type="entry name" value="Putative methyltransferase TM0872, insert domain"/>
    <property type="match status" value="1"/>
</dbReference>
<dbReference type="Gene3D" id="3.40.50.150">
    <property type="entry name" value="Vaccinia Virus protein VP39"/>
    <property type="match status" value="1"/>
</dbReference>
<dbReference type="HAMAP" id="MF_01007">
    <property type="entry name" value="16SrRNA_methyltr_H"/>
    <property type="match status" value="1"/>
</dbReference>
<dbReference type="InterPro" id="IPR002903">
    <property type="entry name" value="RsmH"/>
</dbReference>
<dbReference type="InterPro" id="IPR023397">
    <property type="entry name" value="SAM-dep_MeTrfase_MraW_recog"/>
</dbReference>
<dbReference type="InterPro" id="IPR029063">
    <property type="entry name" value="SAM-dependent_MTases_sf"/>
</dbReference>
<dbReference type="NCBIfam" id="TIGR00006">
    <property type="entry name" value="16S rRNA (cytosine(1402)-N(4))-methyltransferase RsmH"/>
    <property type="match status" value="1"/>
</dbReference>
<dbReference type="PANTHER" id="PTHR11265:SF0">
    <property type="entry name" value="12S RRNA N4-METHYLCYTIDINE METHYLTRANSFERASE"/>
    <property type="match status" value="1"/>
</dbReference>
<dbReference type="PANTHER" id="PTHR11265">
    <property type="entry name" value="S-ADENOSYL-METHYLTRANSFERASE MRAW"/>
    <property type="match status" value="1"/>
</dbReference>
<dbReference type="Pfam" id="PF01795">
    <property type="entry name" value="Methyltransf_5"/>
    <property type="match status" value="1"/>
</dbReference>
<dbReference type="SUPFAM" id="SSF81799">
    <property type="entry name" value="Putative methyltransferase TM0872, insert domain"/>
    <property type="match status" value="1"/>
</dbReference>
<dbReference type="SUPFAM" id="SSF53335">
    <property type="entry name" value="S-adenosyl-L-methionine-dependent methyltransferases"/>
    <property type="match status" value="1"/>
</dbReference>
<proteinExistence type="inferred from homology"/>
<sequence length="373" mass="40275">MGLDLARATRPLPELALAYFPNARSVDSDRDPGAGAVQCGDVAEVCSVTNDPDHGHIPVLLDRCVELLAPALTRTDPDGTEAVLVDATLGAGGHSERFLTDFPALRLIGLDRDPNALAIAGDRLAPFGDRVTLVRTRYDGITSALAEAGVRRIDGVLFDLGVSSMQLDQKQRGFSYSADAPLDMRMDPDALLTAAEIVNTYDAKTLTRILRDYGEERFAGRIADKIVRRRAKQPFTTTSELVELLYEAIPAPARRTGGHPAKRTFQALRIAVNAELDSLRAAIPAALAALRPGGRIVVMAYQSLEDRIVKQAFSTVTASRTPPGLPMELPGHEPEFVAVTRGAERADEQEIERNPRSAPVRLRALEKVGGRGS</sequence>
<reference key="1">
    <citation type="submission" date="2006-10" db="EMBL/GenBank/DDBJ databases">
        <authorList>
            <person name="Fleischmann R.D."/>
            <person name="Dodson R.J."/>
            <person name="Haft D.H."/>
            <person name="Merkel J.S."/>
            <person name="Nelson W.C."/>
            <person name="Fraser C.M."/>
        </authorList>
    </citation>
    <scope>NUCLEOTIDE SEQUENCE [LARGE SCALE GENOMIC DNA]</scope>
    <source>
        <strain>ATCC 700084 / mc(2)155</strain>
    </source>
</reference>
<reference key="2">
    <citation type="journal article" date="2007" name="Genome Biol.">
        <title>Interrupted coding sequences in Mycobacterium smegmatis: authentic mutations or sequencing errors?</title>
        <authorList>
            <person name="Deshayes C."/>
            <person name="Perrodou E."/>
            <person name="Gallien S."/>
            <person name="Euphrasie D."/>
            <person name="Schaeffer C."/>
            <person name="Van-Dorsselaer A."/>
            <person name="Poch O."/>
            <person name="Lecompte O."/>
            <person name="Reyrat J.-M."/>
        </authorList>
    </citation>
    <scope>NUCLEOTIDE SEQUENCE [LARGE SCALE GENOMIC DNA]</scope>
    <source>
        <strain>ATCC 700084 / mc(2)155</strain>
    </source>
</reference>
<reference key="3">
    <citation type="journal article" date="2009" name="Genome Res.">
        <title>Ortho-proteogenomics: multiple proteomes investigation through orthology and a new MS-based protocol.</title>
        <authorList>
            <person name="Gallien S."/>
            <person name="Perrodou E."/>
            <person name="Carapito C."/>
            <person name="Deshayes C."/>
            <person name="Reyrat J.-M."/>
            <person name="Van Dorsselaer A."/>
            <person name="Poch O."/>
            <person name="Schaeffer C."/>
            <person name="Lecompte O."/>
        </authorList>
    </citation>
    <scope>NUCLEOTIDE SEQUENCE [LARGE SCALE GENOMIC DNA]</scope>
    <source>
        <strain>ATCC 700084 / mc(2)155</strain>
    </source>
</reference>
<comment type="function">
    <text evidence="1">Specifically methylates the N4 position of cytidine in position 1402 (C1402) of 16S rRNA.</text>
</comment>
<comment type="catalytic activity">
    <reaction evidence="1">
        <text>cytidine(1402) in 16S rRNA + S-adenosyl-L-methionine = N(4)-methylcytidine(1402) in 16S rRNA + S-adenosyl-L-homocysteine + H(+)</text>
        <dbReference type="Rhea" id="RHEA:42928"/>
        <dbReference type="Rhea" id="RHEA-COMP:10286"/>
        <dbReference type="Rhea" id="RHEA-COMP:10287"/>
        <dbReference type="ChEBI" id="CHEBI:15378"/>
        <dbReference type="ChEBI" id="CHEBI:57856"/>
        <dbReference type="ChEBI" id="CHEBI:59789"/>
        <dbReference type="ChEBI" id="CHEBI:74506"/>
        <dbReference type="ChEBI" id="CHEBI:82748"/>
        <dbReference type="EC" id="2.1.1.199"/>
    </reaction>
</comment>
<comment type="subcellular location">
    <subcellularLocation>
        <location evidence="1">Cytoplasm</location>
    </subcellularLocation>
</comment>
<comment type="similarity">
    <text evidence="1">Belongs to the methyltransferase superfamily. RsmH family.</text>
</comment>
<comment type="sequence caution" evidence="3">
    <conflict type="erroneous initiation">
        <sequence resource="EMBL-CDS" id="ABK70680"/>
    </conflict>
    <text>Truncated N-terminus.</text>
</comment>
<comment type="sequence caution" evidence="3">
    <conflict type="erroneous initiation">
        <sequence resource="EMBL-CDS" id="AFP40592"/>
    </conflict>
    <text>Truncated N-terminus.</text>
</comment>
<accession>A0R024</accession>
<accession>I7G4N5</accession>
<keyword id="KW-0963">Cytoplasm</keyword>
<keyword id="KW-0489">Methyltransferase</keyword>
<keyword id="KW-1185">Reference proteome</keyword>
<keyword id="KW-0698">rRNA processing</keyword>
<keyword id="KW-0949">S-adenosyl-L-methionine</keyword>
<keyword id="KW-0808">Transferase</keyword>
<organism>
    <name type="scientific">Mycolicibacterium smegmatis (strain ATCC 700084 / mc(2)155)</name>
    <name type="common">Mycobacterium smegmatis</name>
    <dbReference type="NCBI Taxonomy" id="246196"/>
    <lineage>
        <taxon>Bacteria</taxon>
        <taxon>Bacillati</taxon>
        <taxon>Actinomycetota</taxon>
        <taxon>Actinomycetes</taxon>
        <taxon>Mycobacteriales</taxon>
        <taxon>Mycobacteriaceae</taxon>
        <taxon>Mycolicibacterium</taxon>
    </lineage>
</organism>
<name>RSMH_MYCS2</name>
<protein>
    <recommendedName>
        <fullName evidence="1">Ribosomal RNA small subunit methyltransferase H</fullName>
        <ecNumber evidence="1">2.1.1.199</ecNumber>
    </recommendedName>
    <alternativeName>
        <fullName evidence="1">16S rRNA m(4)C1402 methyltransferase</fullName>
    </alternativeName>
    <alternativeName>
        <fullName evidence="1">rRNA (cytosine-N(4)-)-methyltransferase RsmH</fullName>
    </alternativeName>
</protein>
<gene>
    <name evidence="1" type="primary">rsmH</name>
    <name type="synonym">mraW</name>
    <name type="ordered locus">MSMEG_4235</name>
    <name type="ordered locus">MSMEI_4135</name>
</gene>